<dbReference type="EMBL" id="AK011942">
    <property type="protein sequence ID" value="BAB27928.3"/>
    <property type="molecule type" value="mRNA"/>
</dbReference>
<dbReference type="EMBL" id="AK154611">
    <property type="protein sequence ID" value="BAE32712.1"/>
    <property type="molecule type" value="mRNA"/>
</dbReference>
<dbReference type="EMBL" id="AC138640">
    <property type="status" value="NOT_ANNOTATED_CDS"/>
    <property type="molecule type" value="Genomic_DNA"/>
</dbReference>
<dbReference type="SMR" id="Q3U3S3"/>
<dbReference type="ComplexPortal" id="CPX-5704">
    <property type="entry name" value="Kinetochore CCAN complex"/>
</dbReference>
<dbReference type="FunCoup" id="Q3U3S3">
    <property type="interactions" value="188"/>
</dbReference>
<dbReference type="STRING" id="10090.ENSMUSP00000107245"/>
<dbReference type="iPTMnet" id="Q3U3S3"/>
<dbReference type="PhosphoSitePlus" id="Q3U3S3"/>
<dbReference type="PaxDb" id="10090-ENSMUSP00000107247"/>
<dbReference type="ProteomicsDB" id="281582"/>
<dbReference type="Pumba" id="Q3U3S3"/>
<dbReference type="Antibodypedia" id="47079">
    <property type="antibodies" value="68 antibodies from 22 providers"/>
</dbReference>
<dbReference type="Ensembl" id="ENSMUST00000028035.14">
    <property type="protein sequence ID" value="ENSMUSP00000028035.8"/>
    <property type="gene ID" value="ENSMUSG00000026708.17"/>
</dbReference>
<dbReference type="UCSC" id="uc007dfe.3">
    <property type="organism name" value="mouse"/>
</dbReference>
<dbReference type="AGR" id="MGI:1917704"/>
<dbReference type="MGI" id="MGI:1917704">
    <property type="gene designation" value="Cenpl"/>
</dbReference>
<dbReference type="VEuPathDB" id="HostDB:ENSMUSG00000026708"/>
<dbReference type="eggNOG" id="ENOG502QS38">
    <property type="taxonomic scope" value="Eukaryota"/>
</dbReference>
<dbReference type="GeneTree" id="ENSGT00390000013877"/>
<dbReference type="InParanoid" id="Q3U3S3"/>
<dbReference type="Reactome" id="R-MMU-141444">
    <property type="pathway name" value="Amplification of signal from unattached kinetochores via a MAD2 inhibitory signal"/>
</dbReference>
<dbReference type="Reactome" id="R-MMU-2467813">
    <property type="pathway name" value="Separation of Sister Chromatids"/>
</dbReference>
<dbReference type="Reactome" id="R-MMU-2500257">
    <property type="pathway name" value="Resolution of Sister Chromatid Cohesion"/>
</dbReference>
<dbReference type="Reactome" id="R-MMU-5663220">
    <property type="pathway name" value="RHO GTPases Activate Formins"/>
</dbReference>
<dbReference type="Reactome" id="R-MMU-606279">
    <property type="pathway name" value="Deposition of new CENPA-containing nucleosomes at the centromere"/>
</dbReference>
<dbReference type="Reactome" id="R-MMU-68877">
    <property type="pathway name" value="Mitotic Prometaphase"/>
</dbReference>
<dbReference type="Reactome" id="R-MMU-9648025">
    <property type="pathway name" value="EML4 and NUDC in mitotic spindle formation"/>
</dbReference>
<dbReference type="PRO" id="PR:Q3U3S3"/>
<dbReference type="Proteomes" id="UP000000589">
    <property type="component" value="Chromosome 1"/>
</dbReference>
<dbReference type="RNAct" id="Q3U3S3">
    <property type="molecule type" value="protein"/>
</dbReference>
<dbReference type="Bgee" id="ENSMUSG00000026708">
    <property type="expression patterns" value="Expressed in manus and 155 other cell types or tissues"/>
</dbReference>
<dbReference type="ExpressionAtlas" id="Q3U3S3">
    <property type="expression patterns" value="baseline and differential"/>
</dbReference>
<dbReference type="GO" id="GO:0000939">
    <property type="term" value="C:inner kinetochore"/>
    <property type="evidence" value="ECO:0000266"/>
    <property type="project" value="ComplexPortal"/>
</dbReference>
<dbReference type="GO" id="GO:0005634">
    <property type="term" value="C:nucleus"/>
    <property type="evidence" value="ECO:0000303"/>
    <property type="project" value="ComplexPortal"/>
</dbReference>
<dbReference type="GO" id="GO:0007059">
    <property type="term" value="P:chromosome segregation"/>
    <property type="evidence" value="ECO:0000303"/>
    <property type="project" value="ComplexPortal"/>
</dbReference>
<dbReference type="InterPro" id="IPR025204">
    <property type="entry name" value="CENP-L"/>
</dbReference>
<dbReference type="PANTHER" id="PTHR31740">
    <property type="entry name" value="CENTROMERE PROTEIN L"/>
    <property type="match status" value="1"/>
</dbReference>
<dbReference type="PANTHER" id="PTHR31740:SF2">
    <property type="entry name" value="CENTROMERE PROTEIN L"/>
    <property type="match status" value="1"/>
</dbReference>
<dbReference type="Pfam" id="PF13092">
    <property type="entry name" value="CENP-L"/>
    <property type="match status" value="1"/>
</dbReference>
<reference key="1">
    <citation type="journal article" date="2005" name="Science">
        <title>The transcriptional landscape of the mammalian genome.</title>
        <authorList>
            <person name="Carninci P."/>
            <person name="Kasukawa T."/>
            <person name="Katayama S."/>
            <person name="Gough J."/>
            <person name="Frith M.C."/>
            <person name="Maeda N."/>
            <person name="Oyama R."/>
            <person name="Ravasi T."/>
            <person name="Lenhard B."/>
            <person name="Wells C."/>
            <person name="Kodzius R."/>
            <person name="Shimokawa K."/>
            <person name="Bajic V.B."/>
            <person name="Brenner S.E."/>
            <person name="Batalov S."/>
            <person name="Forrest A.R."/>
            <person name="Zavolan M."/>
            <person name="Davis M.J."/>
            <person name="Wilming L.G."/>
            <person name="Aidinis V."/>
            <person name="Allen J.E."/>
            <person name="Ambesi-Impiombato A."/>
            <person name="Apweiler R."/>
            <person name="Aturaliya R.N."/>
            <person name="Bailey T.L."/>
            <person name="Bansal M."/>
            <person name="Baxter L."/>
            <person name="Beisel K.W."/>
            <person name="Bersano T."/>
            <person name="Bono H."/>
            <person name="Chalk A.M."/>
            <person name="Chiu K.P."/>
            <person name="Choudhary V."/>
            <person name="Christoffels A."/>
            <person name="Clutterbuck D.R."/>
            <person name="Crowe M.L."/>
            <person name="Dalla E."/>
            <person name="Dalrymple B.P."/>
            <person name="de Bono B."/>
            <person name="Della Gatta G."/>
            <person name="di Bernardo D."/>
            <person name="Down T."/>
            <person name="Engstrom P."/>
            <person name="Fagiolini M."/>
            <person name="Faulkner G."/>
            <person name="Fletcher C.F."/>
            <person name="Fukushima T."/>
            <person name="Furuno M."/>
            <person name="Futaki S."/>
            <person name="Gariboldi M."/>
            <person name="Georgii-Hemming P."/>
            <person name="Gingeras T.R."/>
            <person name="Gojobori T."/>
            <person name="Green R.E."/>
            <person name="Gustincich S."/>
            <person name="Harbers M."/>
            <person name="Hayashi Y."/>
            <person name="Hensch T.K."/>
            <person name="Hirokawa N."/>
            <person name="Hill D."/>
            <person name="Huminiecki L."/>
            <person name="Iacono M."/>
            <person name="Ikeo K."/>
            <person name="Iwama A."/>
            <person name="Ishikawa T."/>
            <person name="Jakt M."/>
            <person name="Kanapin A."/>
            <person name="Katoh M."/>
            <person name="Kawasawa Y."/>
            <person name="Kelso J."/>
            <person name="Kitamura H."/>
            <person name="Kitano H."/>
            <person name="Kollias G."/>
            <person name="Krishnan S.P."/>
            <person name="Kruger A."/>
            <person name="Kummerfeld S.K."/>
            <person name="Kurochkin I.V."/>
            <person name="Lareau L.F."/>
            <person name="Lazarevic D."/>
            <person name="Lipovich L."/>
            <person name="Liu J."/>
            <person name="Liuni S."/>
            <person name="McWilliam S."/>
            <person name="Madan Babu M."/>
            <person name="Madera M."/>
            <person name="Marchionni L."/>
            <person name="Matsuda H."/>
            <person name="Matsuzawa S."/>
            <person name="Miki H."/>
            <person name="Mignone F."/>
            <person name="Miyake S."/>
            <person name="Morris K."/>
            <person name="Mottagui-Tabar S."/>
            <person name="Mulder N."/>
            <person name="Nakano N."/>
            <person name="Nakauchi H."/>
            <person name="Ng P."/>
            <person name="Nilsson R."/>
            <person name="Nishiguchi S."/>
            <person name="Nishikawa S."/>
            <person name="Nori F."/>
            <person name="Ohara O."/>
            <person name="Okazaki Y."/>
            <person name="Orlando V."/>
            <person name="Pang K.C."/>
            <person name="Pavan W.J."/>
            <person name="Pavesi G."/>
            <person name="Pesole G."/>
            <person name="Petrovsky N."/>
            <person name="Piazza S."/>
            <person name="Reed J."/>
            <person name="Reid J.F."/>
            <person name="Ring B.Z."/>
            <person name="Ringwald M."/>
            <person name="Rost B."/>
            <person name="Ruan Y."/>
            <person name="Salzberg S.L."/>
            <person name="Sandelin A."/>
            <person name="Schneider C."/>
            <person name="Schoenbach C."/>
            <person name="Sekiguchi K."/>
            <person name="Semple C.A."/>
            <person name="Seno S."/>
            <person name="Sessa L."/>
            <person name="Sheng Y."/>
            <person name="Shibata Y."/>
            <person name="Shimada H."/>
            <person name="Shimada K."/>
            <person name="Silva D."/>
            <person name="Sinclair B."/>
            <person name="Sperling S."/>
            <person name="Stupka E."/>
            <person name="Sugiura K."/>
            <person name="Sultana R."/>
            <person name="Takenaka Y."/>
            <person name="Taki K."/>
            <person name="Tammoja K."/>
            <person name="Tan S.L."/>
            <person name="Tang S."/>
            <person name="Taylor M.S."/>
            <person name="Tegner J."/>
            <person name="Teichmann S.A."/>
            <person name="Ueda H.R."/>
            <person name="van Nimwegen E."/>
            <person name="Verardo R."/>
            <person name="Wei C.L."/>
            <person name="Yagi K."/>
            <person name="Yamanishi H."/>
            <person name="Zabarovsky E."/>
            <person name="Zhu S."/>
            <person name="Zimmer A."/>
            <person name="Hide W."/>
            <person name="Bult C."/>
            <person name="Grimmond S.M."/>
            <person name="Teasdale R.D."/>
            <person name="Liu E.T."/>
            <person name="Brusic V."/>
            <person name="Quackenbush J."/>
            <person name="Wahlestedt C."/>
            <person name="Mattick J.S."/>
            <person name="Hume D.A."/>
            <person name="Kai C."/>
            <person name="Sasaki D."/>
            <person name="Tomaru Y."/>
            <person name="Fukuda S."/>
            <person name="Kanamori-Katayama M."/>
            <person name="Suzuki M."/>
            <person name="Aoki J."/>
            <person name="Arakawa T."/>
            <person name="Iida J."/>
            <person name="Imamura K."/>
            <person name="Itoh M."/>
            <person name="Kato T."/>
            <person name="Kawaji H."/>
            <person name="Kawagashira N."/>
            <person name="Kawashima T."/>
            <person name="Kojima M."/>
            <person name="Kondo S."/>
            <person name="Konno H."/>
            <person name="Nakano K."/>
            <person name="Ninomiya N."/>
            <person name="Nishio T."/>
            <person name="Okada M."/>
            <person name="Plessy C."/>
            <person name="Shibata K."/>
            <person name="Shiraki T."/>
            <person name="Suzuki S."/>
            <person name="Tagami M."/>
            <person name="Waki K."/>
            <person name="Watahiki A."/>
            <person name="Okamura-Oho Y."/>
            <person name="Suzuki H."/>
            <person name="Kawai J."/>
            <person name="Hayashizaki Y."/>
        </authorList>
    </citation>
    <scope>NUCLEOTIDE SEQUENCE [LARGE SCALE MRNA]</scope>
    <source>
        <strain>NOD</strain>
        <tissue>Dendritic cell</tissue>
        <tissue>Embryo</tissue>
    </source>
</reference>
<reference key="2">
    <citation type="journal article" date="2009" name="PLoS Biol.">
        <title>Lineage-specific biology revealed by a finished genome assembly of the mouse.</title>
        <authorList>
            <person name="Church D.M."/>
            <person name="Goodstadt L."/>
            <person name="Hillier L.W."/>
            <person name="Zody M.C."/>
            <person name="Goldstein S."/>
            <person name="She X."/>
            <person name="Bult C.J."/>
            <person name="Agarwala R."/>
            <person name="Cherry J.L."/>
            <person name="DiCuccio M."/>
            <person name="Hlavina W."/>
            <person name="Kapustin Y."/>
            <person name="Meric P."/>
            <person name="Maglott D."/>
            <person name="Birtle Z."/>
            <person name="Marques A.C."/>
            <person name="Graves T."/>
            <person name="Zhou S."/>
            <person name="Teague B."/>
            <person name="Potamousis K."/>
            <person name="Churas C."/>
            <person name="Place M."/>
            <person name="Herschleb J."/>
            <person name="Runnheim R."/>
            <person name="Forrest D."/>
            <person name="Amos-Landgraf J."/>
            <person name="Schwartz D.C."/>
            <person name="Cheng Z."/>
            <person name="Lindblad-Toh K."/>
            <person name="Eichler E.E."/>
            <person name="Ponting C.P."/>
        </authorList>
    </citation>
    <scope>NUCLEOTIDE SEQUENCE [LARGE SCALE GENOMIC DNA]</scope>
    <source>
        <strain>C57BL/6J</strain>
    </source>
</reference>
<proteinExistence type="evidence at transcript level"/>
<name>CENPL_MOUSE</name>
<keyword id="KW-0137">Centromere</keyword>
<keyword id="KW-0158">Chromosome</keyword>
<keyword id="KW-0539">Nucleus</keyword>
<keyword id="KW-0597">Phosphoprotein</keyword>
<keyword id="KW-1185">Reference proteome</keyword>
<feature type="chain" id="PRO_0000247171" description="Centromere protein L">
    <location>
        <begin position="1"/>
        <end position="329"/>
    </location>
</feature>
<feature type="modified residue" description="Phosphoserine" evidence="2">
    <location>
        <position position="40"/>
    </location>
</feature>
<feature type="modified residue" description="Phosphoserine" evidence="2">
    <location>
        <position position="54"/>
    </location>
</feature>
<feature type="sequence conflict" description="In Ref. 1; BAE32712." evidence="3" ref="1">
    <original>R</original>
    <variation>K</variation>
    <location>
        <position position="36"/>
    </location>
</feature>
<feature type="sequence conflict" description="In Ref. 1; BAB27928." evidence="3" ref="1">
    <original>SN</original>
    <variation>P</variation>
    <location>
        <begin position="328"/>
        <end position="329"/>
    </location>
</feature>
<organism>
    <name type="scientific">Mus musculus</name>
    <name type="common">Mouse</name>
    <dbReference type="NCBI Taxonomy" id="10090"/>
    <lineage>
        <taxon>Eukaryota</taxon>
        <taxon>Metazoa</taxon>
        <taxon>Chordata</taxon>
        <taxon>Craniata</taxon>
        <taxon>Vertebrata</taxon>
        <taxon>Euteleostomi</taxon>
        <taxon>Mammalia</taxon>
        <taxon>Eutheria</taxon>
        <taxon>Euarchontoglires</taxon>
        <taxon>Glires</taxon>
        <taxon>Rodentia</taxon>
        <taxon>Myomorpha</taxon>
        <taxon>Muroidea</taxon>
        <taxon>Muridae</taxon>
        <taxon>Murinae</taxon>
        <taxon>Mus</taxon>
        <taxon>Mus</taxon>
    </lineage>
</organism>
<sequence length="329" mass="37725">MDSCDFRGLTSRRRTSNLKNYFVGATPLQKRLELVRRQNSDFPSPSRRKIPQCSQLQEDIDPQKVAFLLHKQWTIYSLTPLYKFSYSNLKDYSRLLSAFIVAEKQKGVAVEVGEDFNIKVIFSTLLGVKGTQRDHEAFLVQILSKSQSSREHREDKVLWTGWFCCVFGESLQETVSEDFTCLPLFLANGAESNTSLIRDWFQKTFDCCFSPLAISAFNLSWMAAMWTACKMDRYMATTEFLWSVPCSPQSLDISYAIHPEDAKALWESVHKTPGEVTQEEVDLFMNCLYSHFHRHFKIHLAATRLVRVSTSVASAHTDGKIKVSLNRSN</sequence>
<protein>
    <recommendedName>
        <fullName>Centromere protein L</fullName>
        <shortName>CENP-L</shortName>
    </recommendedName>
</protein>
<accession>Q3U3S3</accession>
<accession>E9QKF0</accession>
<accession>Q9CSU9</accession>
<gene>
    <name type="primary">Cenpl</name>
</gene>
<comment type="function">
    <text evidence="1">Component of the CENPA-CAD (nucleosome distal) complex, a complex recruited to centromeres which is involved in assembly of kinetochore proteins, mitotic progression and chromosome segregation. May be involved in incorporation of newly synthesized CENPA into centromeres via its interaction with the CENPA-NAC complex (By similarity).</text>
</comment>
<comment type="subunit">
    <text evidence="1">Component of the CENPA-CAD complex, composed of CENPI, CENPK, CENPL, CENPO, CENPP, CENPQ, CENPR and CENPS. The CENPA-CAD complex interacts with the CENPA-NAC complex, at least composed of CENPA, CENPC, CENPH, CENPM, CENPN, CENPT and CENPU (By similarity).</text>
</comment>
<comment type="subcellular location">
    <subcellularLocation>
        <location evidence="1">Nucleus</location>
    </subcellularLocation>
    <subcellularLocation>
        <location evidence="1">Chromosome</location>
        <location evidence="1">Centromere</location>
    </subcellularLocation>
    <text evidence="1">Localizes exclusively in the centromeres. The CENPA-CAD complex is probably recruited on centromeres by the CENPA-NAC complex (By similarity).</text>
</comment>
<comment type="similarity">
    <text evidence="3">Belongs to the CENP-L/IML3 family.</text>
</comment>
<evidence type="ECO:0000250" key="1"/>
<evidence type="ECO:0000250" key="2">
    <source>
        <dbReference type="UniProtKB" id="Q8N0S6"/>
    </source>
</evidence>
<evidence type="ECO:0000305" key="3"/>